<feature type="chain" id="PRO_0000234784" description="Tyrosine--tRNA ligase">
    <location>
        <begin position="1"/>
        <end position="419"/>
    </location>
</feature>
<feature type="domain" description="S4 RNA-binding" evidence="1">
    <location>
        <begin position="352"/>
        <end position="419"/>
    </location>
</feature>
<feature type="short sequence motif" description="'HIGH' region">
    <location>
        <begin position="39"/>
        <end position="48"/>
    </location>
</feature>
<feature type="short sequence motif" description="'KMSKS' region">
    <location>
        <begin position="229"/>
        <end position="233"/>
    </location>
</feature>
<feature type="binding site" evidence="1">
    <location>
        <position position="34"/>
    </location>
    <ligand>
        <name>L-tyrosine</name>
        <dbReference type="ChEBI" id="CHEBI:58315"/>
    </ligand>
</feature>
<feature type="binding site" evidence="1">
    <location>
        <position position="169"/>
    </location>
    <ligand>
        <name>L-tyrosine</name>
        <dbReference type="ChEBI" id="CHEBI:58315"/>
    </ligand>
</feature>
<feature type="binding site" evidence="1">
    <location>
        <position position="173"/>
    </location>
    <ligand>
        <name>L-tyrosine</name>
        <dbReference type="ChEBI" id="CHEBI:58315"/>
    </ligand>
</feature>
<feature type="binding site" evidence="1">
    <location>
        <position position="232"/>
    </location>
    <ligand>
        <name>ATP</name>
        <dbReference type="ChEBI" id="CHEBI:30616"/>
    </ligand>
</feature>
<accession>Q3K3L4</accession>
<proteinExistence type="inferred from homology"/>
<comment type="function">
    <text evidence="1">Catalyzes the attachment of tyrosine to tRNA(Tyr) in a two-step reaction: tyrosine is first activated by ATP to form Tyr-AMP and then transferred to the acceptor end of tRNA(Tyr).</text>
</comment>
<comment type="catalytic activity">
    <reaction evidence="1">
        <text>tRNA(Tyr) + L-tyrosine + ATP = L-tyrosyl-tRNA(Tyr) + AMP + diphosphate + H(+)</text>
        <dbReference type="Rhea" id="RHEA:10220"/>
        <dbReference type="Rhea" id="RHEA-COMP:9706"/>
        <dbReference type="Rhea" id="RHEA-COMP:9707"/>
        <dbReference type="ChEBI" id="CHEBI:15378"/>
        <dbReference type="ChEBI" id="CHEBI:30616"/>
        <dbReference type="ChEBI" id="CHEBI:33019"/>
        <dbReference type="ChEBI" id="CHEBI:58315"/>
        <dbReference type="ChEBI" id="CHEBI:78442"/>
        <dbReference type="ChEBI" id="CHEBI:78536"/>
        <dbReference type="ChEBI" id="CHEBI:456215"/>
        <dbReference type="EC" id="6.1.1.1"/>
    </reaction>
</comment>
<comment type="subunit">
    <text evidence="1">Homodimer.</text>
</comment>
<comment type="subcellular location">
    <subcellularLocation>
        <location evidence="1">Cytoplasm</location>
    </subcellularLocation>
</comment>
<comment type="similarity">
    <text evidence="1">Belongs to the class-I aminoacyl-tRNA synthetase family. TyrS type 1 subfamily.</text>
</comment>
<sequence>MNIFDELKERGLVFQTTDEDALRKALEEGFVSYYTGYDPTADSLHLGHLVAILTSRRLQLAGHKPYALVGGATGLIGDPSFKDVERSLQTKETVVSWGNKIRGQLSNFLEFETGDNKAVLVNNYDWFSNISFIDFLRDVGKYFTVNYMMSKESVKKRIETGISYTEFAYQIMQGYDFYELNKNYNVTLQIGGSDQWGNMTAGTELIRRKSNGVSHVMTVPLITDSTGKKFGKSEGNAVWLDADKTSPYEMYQFWLNVMDADAVRFLKIFTFLSLKEIEDIRIQFEEAPHQRLAQKTLAREVVTLVHGEKAYKEAVNITEQLFAGNIKGLSVKELKQGLRGVPNYHVQTEDNLNIIDLLVTSGVVNSKRQAREDVSNGAIYINGDRIQDLEYTISENDKLENEITVIRRGKKKYFVLNFK</sequence>
<protein>
    <recommendedName>
        <fullName evidence="1">Tyrosine--tRNA ligase</fullName>
        <ecNumber evidence="1">6.1.1.1</ecNumber>
    </recommendedName>
    <alternativeName>
        <fullName evidence="1">Tyrosyl-tRNA synthetase</fullName>
        <shortName evidence="1">TyrRS</shortName>
    </alternativeName>
</protein>
<evidence type="ECO:0000255" key="1">
    <source>
        <dbReference type="HAMAP-Rule" id="MF_02006"/>
    </source>
</evidence>
<keyword id="KW-0030">Aminoacyl-tRNA synthetase</keyword>
<keyword id="KW-0067">ATP-binding</keyword>
<keyword id="KW-0963">Cytoplasm</keyword>
<keyword id="KW-0436">Ligase</keyword>
<keyword id="KW-0547">Nucleotide-binding</keyword>
<keyword id="KW-0648">Protein biosynthesis</keyword>
<keyword id="KW-0694">RNA-binding</keyword>
<reference key="1">
    <citation type="journal article" date="2005" name="Proc. Natl. Acad. Sci. U.S.A.">
        <title>Genome analysis of multiple pathogenic isolates of Streptococcus agalactiae: implications for the microbial 'pan-genome'.</title>
        <authorList>
            <person name="Tettelin H."/>
            <person name="Masignani V."/>
            <person name="Cieslewicz M.J."/>
            <person name="Donati C."/>
            <person name="Medini D."/>
            <person name="Ward N.L."/>
            <person name="Angiuoli S.V."/>
            <person name="Crabtree J."/>
            <person name="Jones A.L."/>
            <person name="Durkin A.S."/>
            <person name="DeBoy R.T."/>
            <person name="Davidsen T.M."/>
            <person name="Mora M."/>
            <person name="Scarselli M."/>
            <person name="Margarit y Ros I."/>
            <person name="Peterson J.D."/>
            <person name="Hauser C.R."/>
            <person name="Sundaram J.P."/>
            <person name="Nelson W.C."/>
            <person name="Madupu R."/>
            <person name="Brinkac L.M."/>
            <person name="Dodson R.J."/>
            <person name="Rosovitz M.J."/>
            <person name="Sullivan S.A."/>
            <person name="Daugherty S.C."/>
            <person name="Haft D.H."/>
            <person name="Selengut J."/>
            <person name="Gwinn M.L."/>
            <person name="Zhou L."/>
            <person name="Zafar N."/>
            <person name="Khouri H."/>
            <person name="Radune D."/>
            <person name="Dimitrov G."/>
            <person name="Watkins K."/>
            <person name="O'Connor K.J."/>
            <person name="Smith S."/>
            <person name="Utterback T.R."/>
            <person name="White O."/>
            <person name="Rubens C.E."/>
            <person name="Grandi G."/>
            <person name="Madoff L.C."/>
            <person name="Kasper D.L."/>
            <person name="Telford J.L."/>
            <person name="Wessels M.R."/>
            <person name="Rappuoli R."/>
            <person name="Fraser C.M."/>
        </authorList>
    </citation>
    <scope>NUCLEOTIDE SEQUENCE [LARGE SCALE GENOMIC DNA]</scope>
    <source>
        <strain>ATCC 27591 / A909 / CDC SS700</strain>
    </source>
</reference>
<gene>
    <name evidence="1" type="primary">tyrS</name>
    <name type="ordered locus">SAK_0221</name>
</gene>
<name>SYY_STRA1</name>
<dbReference type="EC" id="6.1.1.1" evidence="1"/>
<dbReference type="EMBL" id="CP000114">
    <property type="protein sequence ID" value="ABA44596.1"/>
    <property type="molecule type" value="Genomic_DNA"/>
</dbReference>
<dbReference type="RefSeq" id="WP_001019844.1">
    <property type="nucleotide sequence ID" value="NC_007432.1"/>
</dbReference>
<dbReference type="SMR" id="Q3K3L4"/>
<dbReference type="KEGG" id="sak:SAK_0221"/>
<dbReference type="HOGENOM" id="CLU_024003_0_3_9"/>
<dbReference type="GO" id="GO:0005829">
    <property type="term" value="C:cytosol"/>
    <property type="evidence" value="ECO:0007669"/>
    <property type="project" value="TreeGrafter"/>
</dbReference>
<dbReference type="GO" id="GO:0005524">
    <property type="term" value="F:ATP binding"/>
    <property type="evidence" value="ECO:0007669"/>
    <property type="project" value="UniProtKB-UniRule"/>
</dbReference>
<dbReference type="GO" id="GO:0003723">
    <property type="term" value="F:RNA binding"/>
    <property type="evidence" value="ECO:0007669"/>
    <property type="project" value="UniProtKB-KW"/>
</dbReference>
<dbReference type="GO" id="GO:0004831">
    <property type="term" value="F:tyrosine-tRNA ligase activity"/>
    <property type="evidence" value="ECO:0007669"/>
    <property type="project" value="UniProtKB-UniRule"/>
</dbReference>
<dbReference type="GO" id="GO:0006437">
    <property type="term" value="P:tyrosyl-tRNA aminoacylation"/>
    <property type="evidence" value="ECO:0007669"/>
    <property type="project" value="UniProtKB-UniRule"/>
</dbReference>
<dbReference type="CDD" id="cd00165">
    <property type="entry name" value="S4"/>
    <property type="match status" value="1"/>
</dbReference>
<dbReference type="CDD" id="cd00805">
    <property type="entry name" value="TyrRS_core"/>
    <property type="match status" value="1"/>
</dbReference>
<dbReference type="FunFam" id="1.10.240.10:FF:000001">
    <property type="entry name" value="Tyrosine--tRNA ligase"/>
    <property type="match status" value="1"/>
</dbReference>
<dbReference type="FunFam" id="3.40.50.620:FF:000008">
    <property type="entry name" value="Tyrosine--tRNA ligase"/>
    <property type="match status" value="1"/>
</dbReference>
<dbReference type="Gene3D" id="3.40.50.620">
    <property type="entry name" value="HUPs"/>
    <property type="match status" value="1"/>
</dbReference>
<dbReference type="Gene3D" id="3.10.290.10">
    <property type="entry name" value="RNA-binding S4 domain"/>
    <property type="match status" value="1"/>
</dbReference>
<dbReference type="Gene3D" id="1.10.240.10">
    <property type="entry name" value="Tyrosyl-Transfer RNA Synthetase"/>
    <property type="match status" value="1"/>
</dbReference>
<dbReference type="HAMAP" id="MF_02006">
    <property type="entry name" value="Tyr_tRNA_synth_type1"/>
    <property type="match status" value="1"/>
</dbReference>
<dbReference type="InterPro" id="IPR001412">
    <property type="entry name" value="aa-tRNA-synth_I_CS"/>
</dbReference>
<dbReference type="InterPro" id="IPR002305">
    <property type="entry name" value="aa-tRNA-synth_Ic"/>
</dbReference>
<dbReference type="InterPro" id="IPR014729">
    <property type="entry name" value="Rossmann-like_a/b/a_fold"/>
</dbReference>
<dbReference type="InterPro" id="IPR002942">
    <property type="entry name" value="S4_RNA-bd"/>
</dbReference>
<dbReference type="InterPro" id="IPR036986">
    <property type="entry name" value="S4_RNA-bd_sf"/>
</dbReference>
<dbReference type="InterPro" id="IPR054608">
    <property type="entry name" value="SYY-like_C"/>
</dbReference>
<dbReference type="InterPro" id="IPR002307">
    <property type="entry name" value="Tyr-tRNA-ligase"/>
</dbReference>
<dbReference type="InterPro" id="IPR024088">
    <property type="entry name" value="Tyr-tRNA-ligase_bac-type"/>
</dbReference>
<dbReference type="InterPro" id="IPR024107">
    <property type="entry name" value="Tyr-tRNA-ligase_bac_1"/>
</dbReference>
<dbReference type="NCBIfam" id="TIGR00234">
    <property type="entry name" value="tyrS"/>
    <property type="match status" value="1"/>
</dbReference>
<dbReference type="PANTHER" id="PTHR11766:SF0">
    <property type="entry name" value="TYROSINE--TRNA LIGASE, MITOCHONDRIAL"/>
    <property type="match status" value="1"/>
</dbReference>
<dbReference type="PANTHER" id="PTHR11766">
    <property type="entry name" value="TYROSYL-TRNA SYNTHETASE"/>
    <property type="match status" value="1"/>
</dbReference>
<dbReference type="Pfam" id="PF22421">
    <property type="entry name" value="SYY_C-terminal"/>
    <property type="match status" value="1"/>
</dbReference>
<dbReference type="Pfam" id="PF00579">
    <property type="entry name" value="tRNA-synt_1b"/>
    <property type="match status" value="1"/>
</dbReference>
<dbReference type="PRINTS" id="PR01040">
    <property type="entry name" value="TRNASYNTHTYR"/>
</dbReference>
<dbReference type="SMART" id="SM00363">
    <property type="entry name" value="S4"/>
    <property type="match status" value="1"/>
</dbReference>
<dbReference type="SUPFAM" id="SSF55174">
    <property type="entry name" value="Alpha-L RNA-binding motif"/>
    <property type="match status" value="1"/>
</dbReference>
<dbReference type="SUPFAM" id="SSF52374">
    <property type="entry name" value="Nucleotidylyl transferase"/>
    <property type="match status" value="1"/>
</dbReference>
<dbReference type="PROSITE" id="PS00178">
    <property type="entry name" value="AA_TRNA_LIGASE_I"/>
    <property type="match status" value="1"/>
</dbReference>
<dbReference type="PROSITE" id="PS50889">
    <property type="entry name" value="S4"/>
    <property type="match status" value="1"/>
</dbReference>
<organism>
    <name type="scientific">Streptococcus agalactiae serotype Ia (strain ATCC 27591 / A909 / CDC SS700)</name>
    <dbReference type="NCBI Taxonomy" id="205921"/>
    <lineage>
        <taxon>Bacteria</taxon>
        <taxon>Bacillati</taxon>
        <taxon>Bacillota</taxon>
        <taxon>Bacilli</taxon>
        <taxon>Lactobacillales</taxon>
        <taxon>Streptococcaceae</taxon>
        <taxon>Streptococcus</taxon>
    </lineage>
</organism>